<accession>P41330</accession>
<name>HBA2_ARCGA</name>
<comment type="function">
    <text>Involved in oxygen transport from the lung to the various peripheral tissues.</text>
</comment>
<comment type="subunit">
    <text>Heterotetramer of two alpha chains and two beta chains.</text>
</comment>
<comment type="tissue specificity">
    <text>Red blood cells.</text>
</comment>
<comment type="similarity">
    <text evidence="2">Belongs to the globin family.</text>
</comment>
<feature type="initiator methionine" description="Removed" evidence="1">
    <location>
        <position position="1"/>
    </location>
</feature>
<feature type="chain" id="PRO_0000052560" description="Hemoglobin subunit alpha-2">
    <location>
        <begin position="2"/>
        <end position="142"/>
    </location>
</feature>
<feature type="domain" description="Globin" evidence="2">
    <location>
        <begin position="2"/>
        <end position="142"/>
    </location>
</feature>
<feature type="binding site" evidence="2">
    <location>
        <position position="59"/>
    </location>
    <ligand>
        <name>O2</name>
        <dbReference type="ChEBI" id="CHEBI:15379"/>
    </ligand>
</feature>
<feature type="binding site" description="proximal binding residue" evidence="2">
    <location>
        <position position="88"/>
    </location>
    <ligand>
        <name>heme b</name>
        <dbReference type="ChEBI" id="CHEBI:60344"/>
    </ligand>
    <ligandPart>
        <name>Fe</name>
        <dbReference type="ChEBI" id="CHEBI:18248"/>
    </ligandPart>
</feature>
<protein>
    <recommendedName>
        <fullName>Hemoglobin subunit alpha-2</fullName>
    </recommendedName>
    <alternativeName>
        <fullName>Alpha-2-globin</fullName>
    </alternativeName>
    <alternativeName>
        <fullName>Hemoglobin alpha-2 chain</fullName>
    </alternativeName>
    <alternativeName>
        <fullName>Hemoglobin alpha-II chain</fullName>
    </alternativeName>
</protein>
<reference key="1">
    <citation type="journal article" date="1991" name="J. Protein Chem.">
        <title>The complete primary structure of the marine Carnivora, galapagoes fur seal (Arctocephalus galapagoensis, Otariidae) hemoglobins.</title>
        <authorList>
            <person name="Jahan M."/>
            <person name="Ahmed A."/>
            <person name="Trillmich F."/>
            <person name="Braunitzer G."/>
        </authorList>
    </citation>
    <scope>PROTEIN SEQUENCE OF 2-142</scope>
</reference>
<proteinExistence type="evidence at protein level"/>
<evidence type="ECO:0000250" key="1">
    <source>
        <dbReference type="UniProtKB" id="P0CH26"/>
    </source>
</evidence>
<evidence type="ECO:0000255" key="2">
    <source>
        <dbReference type="PROSITE-ProRule" id="PRU00238"/>
    </source>
</evidence>
<sequence length="142" mass="15378">MVLSPADKTNVKTTWDKLGGHAGEYGGEALERTFTAFPTTKTYFPHFDLSHGSAQVKAHGKKVADALTTAVAHMDDLPGALSALSDLHAYKLRVDPVNFKLLSHCLLVTLACHHPAEFTPAVHASLDKFFSAVSTVLTSKYR</sequence>
<dbReference type="PIR" id="C61434">
    <property type="entry name" value="C61434"/>
</dbReference>
<dbReference type="SMR" id="P41330"/>
<dbReference type="GO" id="GO:0072562">
    <property type="term" value="C:blood microparticle"/>
    <property type="evidence" value="ECO:0007669"/>
    <property type="project" value="TreeGrafter"/>
</dbReference>
<dbReference type="GO" id="GO:0031838">
    <property type="term" value="C:haptoglobin-hemoglobin complex"/>
    <property type="evidence" value="ECO:0007669"/>
    <property type="project" value="TreeGrafter"/>
</dbReference>
<dbReference type="GO" id="GO:0005833">
    <property type="term" value="C:hemoglobin complex"/>
    <property type="evidence" value="ECO:0007669"/>
    <property type="project" value="InterPro"/>
</dbReference>
<dbReference type="GO" id="GO:0031720">
    <property type="term" value="F:haptoglobin binding"/>
    <property type="evidence" value="ECO:0007669"/>
    <property type="project" value="TreeGrafter"/>
</dbReference>
<dbReference type="GO" id="GO:0020037">
    <property type="term" value="F:heme binding"/>
    <property type="evidence" value="ECO:0007669"/>
    <property type="project" value="InterPro"/>
</dbReference>
<dbReference type="GO" id="GO:0005506">
    <property type="term" value="F:iron ion binding"/>
    <property type="evidence" value="ECO:0007669"/>
    <property type="project" value="InterPro"/>
</dbReference>
<dbReference type="GO" id="GO:0043177">
    <property type="term" value="F:organic acid binding"/>
    <property type="evidence" value="ECO:0007669"/>
    <property type="project" value="TreeGrafter"/>
</dbReference>
<dbReference type="GO" id="GO:0019825">
    <property type="term" value="F:oxygen binding"/>
    <property type="evidence" value="ECO:0007669"/>
    <property type="project" value="InterPro"/>
</dbReference>
<dbReference type="GO" id="GO:0005344">
    <property type="term" value="F:oxygen carrier activity"/>
    <property type="evidence" value="ECO:0007669"/>
    <property type="project" value="UniProtKB-KW"/>
</dbReference>
<dbReference type="GO" id="GO:0004601">
    <property type="term" value="F:peroxidase activity"/>
    <property type="evidence" value="ECO:0007669"/>
    <property type="project" value="TreeGrafter"/>
</dbReference>
<dbReference type="GO" id="GO:0042744">
    <property type="term" value="P:hydrogen peroxide catabolic process"/>
    <property type="evidence" value="ECO:0007669"/>
    <property type="project" value="TreeGrafter"/>
</dbReference>
<dbReference type="CDD" id="cd08927">
    <property type="entry name" value="Hb-alpha-like"/>
    <property type="match status" value="1"/>
</dbReference>
<dbReference type="FunFam" id="1.10.490.10:FF:000002">
    <property type="entry name" value="Hemoglobin subunit alpha"/>
    <property type="match status" value="1"/>
</dbReference>
<dbReference type="Gene3D" id="1.10.490.10">
    <property type="entry name" value="Globins"/>
    <property type="match status" value="1"/>
</dbReference>
<dbReference type="InterPro" id="IPR000971">
    <property type="entry name" value="Globin"/>
</dbReference>
<dbReference type="InterPro" id="IPR009050">
    <property type="entry name" value="Globin-like_sf"/>
</dbReference>
<dbReference type="InterPro" id="IPR012292">
    <property type="entry name" value="Globin/Proto"/>
</dbReference>
<dbReference type="InterPro" id="IPR002338">
    <property type="entry name" value="Hemoglobin_a-typ"/>
</dbReference>
<dbReference type="InterPro" id="IPR050056">
    <property type="entry name" value="Hemoglobin_oxygen_transport"/>
</dbReference>
<dbReference type="InterPro" id="IPR002339">
    <property type="entry name" value="Hemoglobin_pi"/>
</dbReference>
<dbReference type="PANTHER" id="PTHR11442">
    <property type="entry name" value="HEMOGLOBIN FAMILY MEMBER"/>
    <property type="match status" value="1"/>
</dbReference>
<dbReference type="PANTHER" id="PTHR11442:SF48">
    <property type="entry name" value="HEMOGLOBIN SUBUNIT ALPHA"/>
    <property type="match status" value="1"/>
</dbReference>
<dbReference type="Pfam" id="PF00042">
    <property type="entry name" value="Globin"/>
    <property type="match status" value="1"/>
</dbReference>
<dbReference type="PRINTS" id="PR00612">
    <property type="entry name" value="ALPHAHAEM"/>
</dbReference>
<dbReference type="PRINTS" id="PR00815">
    <property type="entry name" value="PIHAEM"/>
</dbReference>
<dbReference type="SUPFAM" id="SSF46458">
    <property type="entry name" value="Globin-like"/>
    <property type="match status" value="1"/>
</dbReference>
<dbReference type="PROSITE" id="PS01033">
    <property type="entry name" value="GLOBIN"/>
    <property type="match status" value="1"/>
</dbReference>
<organism>
    <name type="scientific">Arctocephalus galapagoensis</name>
    <name type="common">Galapagoes fur seal</name>
    <name type="synonym">Arctocephalus australis galapagoensis</name>
    <dbReference type="NCBI Taxonomy" id="30584"/>
    <lineage>
        <taxon>Eukaryota</taxon>
        <taxon>Metazoa</taxon>
        <taxon>Chordata</taxon>
        <taxon>Craniata</taxon>
        <taxon>Vertebrata</taxon>
        <taxon>Euteleostomi</taxon>
        <taxon>Mammalia</taxon>
        <taxon>Eutheria</taxon>
        <taxon>Laurasiatheria</taxon>
        <taxon>Carnivora</taxon>
        <taxon>Caniformia</taxon>
        <taxon>Pinnipedia</taxon>
        <taxon>Otariidae</taxon>
        <taxon>Arctocephalus</taxon>
    </lineage>
</organism>
<keyword id="KW-0903">Direct protein sequencing</keyword>
<keyword id="KW-0349">Heme</keyword>
<keyword id="KW-0408">Iron</keyword>
<keyword id="KW-0479">Metal-binding</keyword>
<keyword id="KW-0561">Oxygen transport</keyword>
<keyword id="KW-0813">Transport</keyword>